<proteinExistence type="inferred from homology"/>
<reference key="1">
    <citation type="journal article" date="2008" name="PLoS Genet.">
        <title>Complete genome sequence of the complex carbohydrate-degrading marine bacterium, Saccharophagus degradans strain 2-40 T.</title>
        <authorList>
            <person name="Weiner R.M."/>
            <person name="Taylor L.E. II"/>
            <person name="Henrissat B."/>
            <person name="Hauser L."/>
            <person name="Land M."/>
            <person name="Coutinho P.M."/>
            <person name="Rancurel C."/>
            <person name="Saunders E.H."/>
            <person name="Longmire A.G."/>
            <person name="Zhang H."/>
            <person name="Bayer E.A."/>
            <person name="Gilbert H.J."/>
            <person name="Larimer F."/>
            <person name="Zhulin I.B."/>
            <person name="Ekborg N.A."/>
            <person name="Lamed R."/>
            <person name="Richardson P.M."/>
            <person name="Borovok I."/>
            <person name="Hutcheson S."/>
        </authorList>
    </citation>
    <scope>NUCLEOTIDE SEQUENCE [LARGE SCALE GENOMIC DNA]</scope>
    <source>
        <strain>2-40 / ATCC 43961 / DSM 17024</strain>
    </source>
</reference>
<organism>
    <name type="scientific">Saccharophagus degradans (strain 2-40 / ATCC 43961 / DSM 17024)</name>
    <dbReference type="NCBI Taxonomy" id="203122"/>
    <lineage>
        <taxon>Bacteria</taxon>
        <taxon>Pseudomonadati</taxon>
        <taxon>Pseudomonadota</taxon>
        <taxon>Gammaproteobacteria</taxon>
        <taxon>Cellvibrionales</taxon>
        <taxon>Cellvibrionaceae</taxon>
        <taxon>Saccharophagus</taxon>
    </lineage>
</organism>
<sequence>MSRSKSSGRWLQEHFNDQYVKDSQKDGYRSRASYKLIELNDKDKLIKSGQTVVDLGAAPGGWSQVAAQIVGDGGRVVASDILPMDSLAGVDFVQGDFTEEAVLEQLLELLGEAKADLVISDMAPNMSGIADVDQPKSMYLVELALDMAKTTLKIGGSFACKVFQGEGFDELVLACRECFQKVLVRKPSASRPRSREVYIVAKGYKG</sequence>
<evidence type="ECO:0000255" key="1">
    <source>
        <dbReference type="HAMAP-Rule" id="MF_01547"/>
    </source>
</evidence>
<feature type="chain" id="PRO_0000282793" description="Ribosomal RNA large subunit methyltransferase E">
    <location>
        <begin position="1"/>
        <end position="206"/>
    </location>
</feature>
<feature type="active site" description="Proton acceptor" evidence="1">
    <location>
        <position position="161"/>
    </location>
</feature>
<feature type="binding site" evidence="1">
    <location>
        <position position="60"/>
    </location>
    <ligand>
        <name>S-adenosyl-L-methionine</name>
        <dbReference type="ChEBI" id="CHEBI:59789"/>
    </ligand>
</feature>
<feature type="binding site" evidence="1">
    <location>
        <position position="62"/>
    </location>
    <ligand>
        <name>S-adenosyl-L-methionine</name>
        <dbReference type="ChEBI" id="CHEBI:59789"/>
    </ligand>
</feature>
<feature type="binding site" evidence="1">
    <location>
        <position position="80"/>
    </location>
    <ligand>
        <name>S-adenosyl-L-methionine</name>
        <dbReference type="ChEBI" id="CHEBI:59789"/>
    </ligand>
</feature>
<feature type="binding site" evidence="1">
    <location>
        <position position="96"/>
    </location>
    <ligand>
        <name>S-adenosyl-L-methionine</name>
        <dbReference type="ChEBI" id="CHEBI:59789"/>
    </ligand>
</feature>
<feature type="binding site" evidence="1">
    <location>
        <position position="121"/>
    </location>
    <ligand>
        <name>S-adenosyl-L-methionine</name>
        <dbReference type="ChEBI" id="CHEBI:59789"/>
    </ligand>
</feature>
<gene>
    <name evidence="1" type="primary">rlmE</name>
    <name evidence="1" type="synonym">ftsJ</name>
    <name evidence="1" type="synonym">rrmJ</name>
    <name type="ordered locus">Sde_2721</name>
</gene>
<keyword id="KW-0963">Cytoplasm</keyword>
<keyword id="KW-0489">Methyltransferase</keyword>
<keyword id="KW-1185">Reference proteome</keyword>
<keyword id="KW-0698">rRNA processing</keyword>
<keyword id="KW-0949">S-adenosyl-L-methionine</keyword>
<keyword id="KW-0808">Transferase</keyword>
<accession>Q21H48</accession>
<dbReference type="EC" id="2.1.1.166" evidence="1"/>
<dbReference type="EMBL" id="CP000282">
    <property type="protein sequence ID" value="ABD81981.1"/>
    <property type="molecule type" value="Genomic_DNA"/>
</dbReference>
<dbReference type="RefSeq" id="WP_011469198.1">
    <property type="nucleotide sequence ID" value="NC_007912.1"/>
</dbReference>
<dbReference type="SMR" id="Q21H48"/>
<dbReference type="STRING" id="203122.Sde_2721"/>
<dbReference type="GeneID" id="98614380"/>
<dbReference type="KEGG" id="sde:Sde_2721"/>
<dbReference type="eggNOG" id="COG0293">
    <property type="taxonomic scope" value="Bacteria"/>
</dbReference>
<dbReference type="HOGENOM" id="CLU_009422_4_0_6"/>
<dbReference type="OrthoDB" id="9790080at2"/>
<dbReference type="Proteomes" id="UP000001947">
    <property type="component" value="Chromosome"/>
</dbReference>
<dbReference type="GO" id="GO:0005737">
    <property type="term" value="C:cytoplasm"/>
    <property type="evidence" value="ECO:0007669"/>
    <property type="project" value="UniProtKB-SubCell"/>
</dbReference>
<dbReference type="GO" id="GO:0008650">
    <property type="term" value="F:rRNA (uridine-2'-O-)-methyltransferase activity"/>
    <property type="evidence" value="ECO:0007669"/>
    <property type="project" value="UniProtKB-UniRule"/>
</dbReference>
<dbReference type="FunFam" id="3.40.50.150:FF:000005">
    <property type="entry name" value="Ribosomal RNA large subunit methyltransferase E"/>
    <property type="match status" value="1"/>
</dbReference>
<dbReference type="Gene3D" id="3.40.50.150">
    <property type="entry name" value="Vaccinia Virus protein VP39"/>
    <property type="match status" value="1"/>
</dbReference>
<dbReference type="HAMAP" id="MF_01547">
    <property type="entry name" value="RNA_methyltr_E"/>
    <property type="match status" value="1"/>
</dbReference>
<dbReference type="InterPro" id="IPR050082">
    <property type="entry name" value="RNA_methyltr_RlmE"/>
</dbReference>
<dbReference type="InterPro" id="IPR002877">
    <property type="entry name" value="RNA_MeTrfase_FtsJ_dom"/>
</dbReference>
<dbReference type="InterPro" id="IPR015507">
    <property type="entry name" value="rRNA-MeTfrase_E"/>
</dbReference>
<dbReference type="InterPro" id="IPR029063">
    <property type="entry name" value="SAM-dependent_MTases_sf"/>
</dbReference>
<dbReference type="NCBIfam" id="NF008390">
    <property type="entry name" value="PRK11188.1"/>
    <property type="match status" value="1"/>
</dbReference>
<dbReference type="PANTHER" id="PTHR10920">
    <property type="entry name" value="RIBOSOMAL RNA METHYLTRANSFERASE"/>
    <property type="match status" value="1"/>
</dbReference>
<dbReference type="PANTHER" id="PTHR10920:SF18">
    <property type="entry name" value="RRNA METHYLTRANSFERASE 2, MITOCHONDRIAL"/>
    <property type="match status" value="1"/>
</dbReference>
<dbReference type="Pfam" id="PF01728">
    <property type="entry name" value="FtsJ"/>
    <property type="match status" value="1"/>
</dbReference>
<dbReference type="PIRSF" id="PIRSF005461">
    <property type="entry name" value="23S_rRNA_mtase"/>
    <property type="match status" value="1"/>
</dbReference>
<dbReference type="SUPFAM" id="SSF53335">
    <property type="entry name" value="S-adenosyl-L-methionine-dependent methyltransferases"/>
    <property type="match status" value="1"/>
</dbReference>
<protein>
    <recommendedName>
        <fullName evidence="1">Ribosomal RNA large subunit methyltransferase E</fullName>
        <ecNumber evidence="1">2.1.1.166</ecNumber>
    </recommendedName>
    <alternativeName>
        <fullName evidence="1">23S rRNA Um2552 methyltransferase</fullName>
    </alternativeName>
    <alternativeName>
        <fullName evidence="1">rRNA (uridine-2'-O-)-methyltransferase</fullName>
    </alternativeName>
</protein>
<comment type="function">
    <text evidence="1">Specifically methylates the uridine in position 2552 of 23S rRNA at the 2'-O position of the ribose in the fully assembled 50S ribosomal subunit.</text>
</comment>
<comment type="catalytic activity">
    <reaction evidence="1">
        <text>uridine(2552) in 23S rRNA + S-adenosyl-L-methionine = 2'-O-methyluridine(2552) in 23S rRNA + S-adenosyl-L-homocysteine + H(+)</text>
        <dbReference type="Rhea" id="RHEA:42720"/>
        <dbReference type="Rhea" id="RHEA-COMP:10202"/>
        <dbReference type="Rhea" id="RHEA-COMP:10203"/>
        <dbReference type="ChEBI" id="CHEBI:15378"/>
        <dbReference type="ChEBI" id="CHEBI:57856"/>
        <dbReference type="ChEBI" id="CHEBI:59789"/>
        <dbReference type="ChEBI" id="CHEBI:65315"/>
        <dbReference type="ChEBI" id="CHEBI:74478"/>
        <dbReference type="EC" id="2.1.1.166"/>
    </reaction>
</comment>
<comment type="subcellular location">
    <subcellularLocation>
        <location evidence="1">Cytoplasm</location>
    </subcellularLocation>
</comment>
<comment type="similarity">
    <text evidence="1">Belongs to the class I-like SAM-binding methyltransferase superfamily. RNA methyltransferase RlmE family.</text>
</comment>
<name>RLME_SACD2</name>